<sequence>MASKESKPSRTTRRGMEPPLRETWNQVLQELVKRQQQEEEEQQGLVSGKKKSWVSIDLLGTEGKDIKKVNIWEPCEKWFAQVVWGVLWVLQIVLWGCLMWEVRKGNQCQAEEVIALVSDPGGFQRVQHVETVPVTCVTKNFTQWGCQPEGAYPDPELEYRNISREILEEVYKQDWPWNTYHWPLWQMENMRQWMKENEKEYKERTNKTKEDIDDLVAGRIRGRFCVPYPYALLRCEEWCWYPESINQETGHAEKIKINCTKAKAVSCTEKMSLAAVQRVYWEKEDEESMKFLNIKACNISLRCQDEGKSPGGCVQGYPIPKGAEIIPEAMKYLRGKKSRYGGIKDKNGELKLPLSVRVWVRMANLSGWVNGTPPYWSARINGSTGINGTRWYGIGTLHHLGCNISSNPERGICNFTGELWIGGDKFPYYYTPSWNCSQNWTGHPVWHVFRYLDMTEHMTSRCIQRPKRHNITVGNGTITGNCSVTNWDGCNCTRSGNHLYNSTSGGLLVIICRQNSTITGIMGTNTNWTTMWNIYQNCSRCNNSSLDRTGSGTLGTVNNLKCSLPHRNESNKWTCKSQRDSYIAGRDFWGKVKAKYSCESNLGGLDSMMHQQMLLQRYQVIRVRAYTYGVVEMPQSYMEAQGENKRSRRNLQRKKRGIGLVIVLAIMAIIAAAGAGLGVANAVQQSYTRTAVQSLANATAAQQEVLEASYAMVQHIAKGIRILEARVARVEALVDRMMVYQELDCWHYQHYCVTSTRSEVANYVNWTRFKDNCTWQQWEEEIEQHEGNLSLLLREAALQVHIAQRDARRIPDAWKAIQEAFNWSSWFSWLKYIPWIIMGIVGLMCFRILMCVISMCLQAYKQVKQIRYTQVTVVIEAPVELEEKQKRNGDGTNGCASLERERRTSHRSFIQIWRATWWAWKTSPWRHNWRTMPYITLLPILVIWQWMEENGWNGENQHKKKKERVDCQDREQMPTLENDYVEL</sequence>
<accession>P35954</accession>
<organism>
    <name type="scientific">Maedi visna virus (strain KV1772)</name>
    <name type="common">MVV</name>
    <name type="synonym">Visna lentivirus</name>
    <dbReference type="NCBI Taxonomy" id="36374"/>
    <lineage>
        <taxon>Viruses</taxon>
        <taxon>Riboviria</taxon>
        <taxon>Pararnavirae</taxon>
        <taxon>Artverviricota</taxon>
        <taxon>Revtraviricetes</taxon>
        <taxon>Ortervirales</taxon>
        <taxon>Retroviridae</taxon>
        <taxon>Orthoretrovirinae</taxon>
        <taxon>Lentivirus</taxon>
        <taxon>Visna-maedi virus</taxon>
    </lineage>
</organism>
<protein>
    <recommendedName>
        <fullName>Envelope glycoprotein gp160</fullName>
    </recommendedName>
    <alternativeName>
        <fullName>Env polyprotein</fullName>
    </alternativeName>
    <component>
        <recommendedName>
            <fullName>Surface protein</fullName>
        </recommendedName>
        <alternativeName>
            <fullName>Glycoprotein 135</fullName>
            <shortName>gp135</shortName>
        </alternativeName>
    </component>
    <component>
        <recommendedName>
            <fullName>Transmembrane protein</fullName>
        </recommendedName>
        <alternativeName>
            <fullName>Glycoprotein 46</fullName>
            <shortName>gp46</shortName>
        </alternativeName>
    </component>
</protein>
<dbReference type="EMBL" id="S55323">
    <property type="protein sequence ID" value="AAB25463.1"/>
    <property type="molecule type" value="Genomic_DNA"/>
</dbReference>
<dbReference type="EMBL" id="L06906">
    <property type="protein sequence ID" value="AAA48362.1"/>
    <property type="molecule type" value="Genomic_RNA"/>
</dbReference>
<dbReference type="PDB" id="1JEK">
    <property type="method" value="X-ray"/>
    <property type="resolution" value="1.50 A"/>
    <property type="chains" value="A=693-732, B=775-808"/>
</dbReference>
<dbReference type="PDBsum" id="1JEK"/>
<dbReference type="SMR" id="P35954"/>
<dbReference type="GlyCosmos" id="P35954">
    <property type="glycosylation" value="28 sites, No reported glycans"/>
</dbReference>
<dbReference type="KEGG" id="vg:1490016"/>
<dbReference type="EvolutionaryTrace" id="P35954"/>
<dbReference type="Proteomes" id="UP000202605">
    <property type="component" value="Segment"/>
</dbReference>
<dbReference type="GO" id="GO:0020002">
    <property type="term" value="C:host cell plasma membrane"/>
    <property type="evidence" value="ECO:0007669"/>
    <property type="project" value="UniProtKB-SubCell"/>
</dbReference>
<dbReference type="GO" id="GO:0016020">
    <property type="term" value="C:membrane"/>
    <property type="evidence" value="ECO:0007669"/>
    <property type="project" value="UniProtKB-KW"/>
</dbReference>
<dbReference type="GO" id="GO:0019031">
    <property type="term" value="C:viral envelope"/>
    <property type="evidence" value="ECO:0007669"/>
    <property type="project" value="UniProtKB-KW"/>
</dbReference>
<dbReference type="GO" id="GO:0055036">
    <property type="term" value="C:virion membrane"/>
    <property type="evidence" value="ECO:0007669"/>
    <property type="project" value="UniProtKB-SubCell"/>
</dbReference>
<dbReference type="GO" id="GO:0046718">
    <property type="term" value="P:symbiont entry into host cell"/>
    <property type="evidence" value="ECO:0007669"/>
    <property type="project" value="UniProtKB-KW"/>
</dbReference>
<dbReference type="GO" id="GO:0019062">
    <property type="term" value="P:virion attachment to host cell"/>
    <property type="evidence" value="ECO:0007669"/>
    <property type="project" value="UniProtKB-KW"/>
</dbReference>
<dbReference type="Gene3D" id="1.20.5.440">
    <property type="entry name" value="ATP synthase delta/epsilon subunit, C-terminal domain"/>
    <property type="match status" value="1"/>
</dbReference>
<dbReference type="SUPFAM" id="SSF58069">
    <property type="entry name" value="Virus ectodomain"/>
    <property type="match status" value="1"/>
</dbReference>
<evidence type="ECO:0000250" key="1"/>
<evidence type="ECO:0000255" key="2"/>
<evidence type="ECO:0000256" key="3">
    <source>
        <dbReference type="SAM" id="MobiDB-lite"/>
    </source>
</evidence>
<evidence type="ECO:0000305" key="4"/>
<evidence type="ECO:0007829" key="5">
    <source>
        <dbReference type="PDB" id="1JEK"/>
    </source>
</evidence>
<keyword id="KW-0002">3D-structure</keyword>
<keyword id="KW-0165">Cleavage on pair of basic residues</keyword>
<keyword id="KW-0175">Coiled coil</keyword>
<keyword id="KW-1015">Disulfide bond</keyword>
<keyword id="KW-0325">Glycoprotein</keyword>
<keyword id="KW-1032">Host cell membrane</keyword>
<keyword id="KW-1043">Host membrane</keyword>
<keyword id="KW-0945">Host-virus interaction</keyword>
<keyword id="KW-0449">Lipoprotein</keyword>
<keyword id="KW-0472">Membrane</keyword>
<keyword id="KW-0564">Palmitate</keyword>
<keyword id="KW-0732">Signal</keyword>
<keyword id="KW-0812">Transmembrane</keyword>
<keyword id="KW-1133">Transmembrane helix</keyword>
<keyword id="KW-1161">Viral attachment to host cell</keyword>
<keyword id="KW-0261">Viral envelope protein</keyword>
<keyword id="KW-0946">Virion</keyword>
<keyword id="KW-1160">Virus entry into host cell</keyword>
<feature type="signal peptide" evidence="2">
    <location>
        <begin position="1"/>
        <end position="106"/>
    </location>
</feature>
<feature type="chain" id="PRO_0000239543" description="Envelope glycoprotein gp160">
    <location>
        <begin position="107"/>
        <end position="983"/>
    </location>
</feature>
<feature type="chain" id="PRO_0000038744" description="Surface protein" evidence="1">
    <location>
        <begin position="107"/>
        <end position="656"/>
    </location>
</feature>
<feature type="chain" id="PRO_0000038745" description="Transmembrane protein" evidence="1">
    <location>
        <begin position="657"/>
        <end position="983"/>
    </location>
</feature>
<feature type="topological domain" description="Extracellular" evidence="2">
    <location>
        <begin position="107"/>
        <end position="832"/>
    </location>
</feature>
<feature type="transmembrane region" description="Helical" evidence="2">
    <location>
        <begin position="833"/>
        <end position="853"/>
    </location>
</feature>
<feature type="topological domain" description="Cytoplasmic" evidence="2">
    <location>
        <begin position="854"/>
        <end position="983"/>
    </location>
</feature>
<feature type="region of interest" description="Disordered" evidence="3">
    <location>
        <begin position="1"/>
        <end position="22"/>
    </location>
</feature>
<feature type="region of interest" description="Fusion peptide">
    <location>
        <begin position="657"/>
        <end position="677"/>
    </location>
</feature>
<feature type="region of interest" description="Immunosuppression" evidence="1">
    <location>
        <begin position="723"/>
        <end position="739"/>
    </location>
</feature>
<feature type="coiled-coil region" evidence="2">
    <location>
        <begin position="689"/>
        <end position="739"/>
    </location>
</feature>
<feature type="coiled-coil region" evidence="2">
    <location>
        <begin position="780"/>
        <end position="815"/>
    </location>
</feature>
<feature type="compositionally biased region" description="Basic and acidic residues" evidence="3">
    <location>
        <begin position="1"/>
        <end position="20"/>
    </location>
</feature>
<feature type="site" description="Cleavage; by host" evidence="1">
    <location>
        <begin position="656"/>
        <end position="657"/>
    </location>
</feature>
<feature type="lipid moiety-binding region" description="S-palmitoyl cysteine; by host" evidence="1">
    <location>
        <position position="856"/>
    </location>
</feature>
<feature type="glycosylation site" description="N-linked (GlcNAc...) asparagine; by host" evidence="2">
    <location>
        <position position="140"/>
    </location>
</feature>
<feature type="glycosylation site" description="N-linked (GlcNAc...) asparagine; by host" evidence="2">
    <location>
        <position position="161"/>
    </location>
</feature>
<feature type="glycosylation site" description="N-linked (GlcNAc...) asparagine; by host" evidence="2">
    <location>
        <position position="206"/>
    </location>
</feature>
<feature type="glycosylation site" description="N-linked (GlcNAc...) asparagine; by host" evidence="2">
    <location>
        <position position="258"/>
    </location>
</feature>
<feature type="glycosylation site" description="N-linked (GlcNAc...) asparagine; by host" evidence="2">
    <location>
        <position position="298"/>
    </location>
</feature>
<feature type="glycosylation site" description="N-linked (GlcNAc...) asparagine; by host" evidence="2">
    <location>
        <position position="364"/>
    </location>
</feature>
<feature type="glycosylation site" description="N-linked (GlcNAc...) asparagine; by host" evidence="2">
    <location>
        <position position="381"/>
    </location>
</feature>
<feature type="glycosylation site" description="N-linked (GlcNAc...) asparagine; by host" evidence="2">
    <location>
        <position position="387"/>
    </location>
</feature>
<feature type="glycosylation site" description="N-linked (GlcNAc...) asparagine; by host" evidence="2">
    <location>
        <position position="403"/>
    </location>
</feature>
<feature type="glycosylation site" description="N-linked (GlcNAc...) asparagine; by host" evidence="2">
    <location>
        <position position="414"/>
    </location>
</feature>
<feature type="glycosylation site" description="N-linked (GlcNAc...) asparagine; by host" evidence="2">
    <location>
        <position position="435"/>
    </location>
</feature>
<feature type="glycosylation site" description="N-linked (GlcNAc...) asparagine; by host" evidence="2">
    <location>
        <position position="439"/>
    </location>
</feature>
<feature type="glycosylation site" description="N-linked (GlcNAc...) asparagine; by host" evidence="2">
    <location>
        <position position="470"/>
    </location>
</feature>
<feature type="glycosylation site" description="N-linked (GlcNAc...) asparagine; by host" evidence="2">
    <location>
        <position position="475"/>
    </location>
</feature>
<feature type="glycosylation site" description="N-linked (GlcNAc...) asparagine; by host" evidence="2">
    <location>
        <position position="481"/>
    </location>
</feature>
<feature type="glycosylation site" description="N-linked (GlcNAc...) asparagine; by host" evidence="2">
    <location>
        <position position="491"/>
    </location>
</feature>
<feature type="glycosylation site" description="N-linked (GlcNAc...) asparagine; by host" evidence="2">
    <location>
        <position position="501"/>
    </location>
</feature>
<feature type="glycosylation site" description="N-linked (GlcNAc...) asparagine; by host" evidence="2">
    <location>
        <position position="515"/>
    </location>
</feature>
<feature type="glycosylation site" description="N-linked (GlcNAc...) asparagine; by host" evidence="2">
    <location>
        <position position="527"/>
    </location>
</feature>
<feature type="glycosylation site" description="N-linked (GlcNAc...) asparagine; by host" evidence="2">
    <location>
        <position position="537"/>
    </location>
</feature>
<feature type="glycosylation site" description="N-linked (GlcNAc...) asparagine; by host" evidence="2">
    <location>
        <position position="542"/>
    </location>
</feature>
<feature type="glycosylation site" description="N-linked (GlcNAc...) asparagine; by host" evidence="2">
    <location>
        <position position="543"/>
    </location>
</feature>
<feature type="glycosylation site" description="N-linked (GlcNAc...) asparagine; by host" evidence="2">
    <location>
        <position position="568"/>
    </location>
</feature>
<feature type="glycosylation site" description="N-linked (GlcNAc...) asparagine; by host" evidence="2">
    <location>
        <position position="697"/>
    </location>
</feature>
<feature type="glycosylation site" description="N-linked (GlcNAc...) asparagine; by host" evidence="2">
    <location>
        <position position="765"/>
    </location>
</feature>
<feature type="glycosylation site" description="N-linked (GlcNAc...) asparagine; by host" evidence="2">
    <location>
        <position position="772"/>
    </location>
</feature>
<feature type="glycosylation site" description="N-linked (GlcNAc...) asparagine; by host" evidence="2">
    <location>
        <position position="788"/>
    </location>
</feature>
<feature type="glycosylation site" description="N-linked (GlcNAc...) asparagine; by host" evidence="2">
    <location>
        <position position="822"/>
    </location>
</feature>
<feature type="sequence conflict" description="In Ref. 1; AAA48362." evidence="4" ref="1">
    <original>R</original>
    <variation>H</variation>
    <location>
        <position position="900"/>
    </location>
</feature>
<feature type="helix" evidence="5">
    <location>
        <begin position="694"/>
        <end position="731"/>
    </location>
</feature>
<feature type="helix" evidence="5">
    <location>
        <begin position="776"/>
        <end position="807"/>
    </location>
</feature>
<organismHost>
    <name type="scientific">Ovis aries</name>
    <name type="common">Sheep</name>
    <dbReference type="NCBI Taxonomy" id="9940"/>
</organismHost>
<gene>
    <name type="primary">env</name>
</gene>
<reference key="1">
    <citation type="journal article" date="1993" name="Virology">
        <title>Nucleotide sequence and biological properties of a pathogenic proviral molecular clone of neurovirulent visna virus.</title>
        <authorList>
            <person name="Andresson O.S."/>
            <person name="Elser J.E."/>
            <person name="Tobin G.J."/>
            <person name="Greenwood J.D."/>
            <person name="Gonda M.A."/>
            <person name="Georgsson G."/>
            <person name="Andresdottir V."/>
            <person name="Benediktsdottir E."/>
            <person name="Carlsdottir H.M."/>
            <person name="Maentylae E.O."/>
            <person name="Rafnar B."/>
            <person name="Palsson P.A."/>
            <person name="Casey J.W."/>
            <person name="Petursson G."/>
        </authorList>
    </citation>
    <scope>NUCLEOTIDE SEQUENCE [GENOMIC DNA]</scope>
</reference>
<proteinExistence type="evidence at protein level"/>
<name>ENV_VILVK</name>
<comment type="function">
    <text evidence="1">The surface protein (SU) attaches the virus to the host cell by binding to its receptor. This interaction triggers the refolding of the transmembrane protein (TM) and is thought to activate its fusogenic potential by unmasking its fusion peptide. Fusion occurs at the host cell plasma membrane (By similarity).</text>
</comment>
<comment type="function">
    <text evidence="1">The transmembrane protein (TM) acts as a class I viral fusion protein. Under the current model, the protein has at least 3 conformational states: pre-fusion native state, pre-hairpin intermediate state, and post-fusion hairpin state. During viral and target cell membrane fusion, the coiled coil regions (heptad repeats) assume a trimer-of-hairpins structure, positioning the fusion peptide in close proximity to the C-terminal region of the ectodomain. The formation of this structure appears to drive apposition and subsequent fusion of viral and target cell membranes. Membranes fusion leads to delivery of the nucleocapsid into the cytoplasm (By similarity).</text>
</comment>
<comment type="subunit">
    <text evidence="1">The mature envelope protein (Env) consists of a trimer of SU-TM heterodimers attached by noncovalent interactions or by a labile interchain disulfide bond.</text>
</comment>
<comment type="subcellular location">
    <molecule>Transmembrane protein</molecule>
    <subcellularLocation>
        <location evidence="1">Virion membrane</location>
        <topology evidence="1">Single-pass type I membrane protein</topology>
    </subcellularLocation>
    <subcellularLocation>
        <location evidence="1">Host cell membrane</location>
        <topology evidence="1">Single-pass type I membrane protein</topology>
    </subcellularLocation>
    <text evidence="1">It is probably concentrated at the site of budding and incorporated into the virions possibly by contacts between the cytoplasmic tail of Env and the N-terminus of Gag.</text>
</comment>
<comment type="subcellular location">
    <molecule>Surface protein</molecule>
    <subcellularLocation>
        <location evidence="1">Virion membrane</location>
        <topology evidence="1">Peripheral membrane protein</topology>
    </subcellularLocation>
    <subcellularLocation>
        <location evidence="1">Host cell membrane</location>
        <topology evidence="1">Peripheral membrane protein</topology>
    </subcellularLocation>
    <text evidence="1">The surface protein is not anchored to the viral envelope, but associates with the extravirion surface through its binding to TM. It is probably concentrated at the site of budding and incorporated into the virions possibly by contacts between the cytoplasmic tail of Env and the N-terminus of Gag (By similarity).</text>
</comment>
<comment type="PTM">
    <text evidence="1">Specific enzymatic cleavages in vivo yield mature proteins. Envelope glycoproteins are synthesized as an inactive precursor that is N-glycosylated and processed likely by host cell furin or by a furin-like protease in the Golgi to yield the mature SU and TM proteins. The cleavage site between SU and TM requires the minimal sequence [KR]-X-[KR]-R (By similarity).</text>
</comment>
<comment type="PTM">
    <text evidence="1">The transmembrane protein is palmitoylated.</text>
</comment>